<evidence type="ECO:0000255" key="1">
    <source>
        <dbReference type="HAMAP-Rule" id="MF_00068"/>
    </source>
</evidence>
<feature type="chain" id="PRO_1000075105" description="N-acetylmuramic acid 6-phosphate etherase">
    <location>
        <begin position="1"/>
        <end position="304"/>
    </location>
</feature>
<feature type="domain" description="SIS" evidence="1">
    <location>
        <begin position="58"/>
        <end position="221"/>
    </location>
</feature>
<feature type="active site" description="Proton donor" evidence="1">
    <location>
        <position position="86"/>
    </location>
</feature>
<feature type="active site" evidence="1">
    <location>
        <position position="117"/>
    </location>
</feature>
<gene>
    <name evidence="1" type="primary">murQ</name>
    <name type="ordered locus">Cbei_1917</name>
</gene>
<protein>
    <recommendedName>
        <fullName evidence="1">N-acetylmuramic acid 6-phosphate etherase</fullName>
        <shortName evidence="1">MurNAc-6-P etherase</shortName>
        <ecNumber evidence="1">4.2.1.126</ecNumber>
    </recommendedName>
    <alternativeName>
        <fullName evidence="1">N-acetylmuramic acid 6-phosphate hydrolase</fullName>
    </alternativeName>
    <alternativeName>
        <fullName evidence="1">N-acetylmuramic acid 6-phosphate lyase</fullName>
    </alternativeName>
</protein>
<accession>A6LUQ7</accession>
<reference key="1">
    <citation type="submission" date="2007-06" db="EMBL/GenBank/DDBJ databases">
        <title>Complete sequence of Clostridium beijerinckii NCIMB 8052.</title>
        <authorList>
            <consortium name="US DOE Joint Genome Institute"/>
            <person name="Copeland A."/>
            <person name="Lucas S."/>
            <person name="Lapidus A."/>
            <person name="Barry K."/>
            <person name="Detter J.C."/>
            <person name="Glavina del Rio T."/>
            <person name="Hammon N."/>
            <person name="Israni S."/>
            <person name="Dalin E."/>
            <person name="Tice H."/>
            <person name="Pitluck S."/>
            <person name="Sims D."/>
            <person name="Brettin T."/>
            <person name="Bruce D."/>
            <person name="Tapia R."/>
            <person name="Brainard J."/>
            <person name="Schmutz J."/>
            <person name="Larimer F."/>
            <person name="Land M."/>
            <person name="Hauser L."/>
            <person name="Kyrpides N."/>
            <person name="Mikhailova N."/>
            <person name="Bennet G."/>
            <person name="Cann I."/>
            <person name="Chen J.-S."/>
            <person name="Contreras A.L."/>
            <person name="Jones D."/>
            <person name="Kashket E."/>
            <person name="Mitchell W."/>
            <person name="Stoddard S."/>
            <person name="Schwarz W."/>
            <person name="Qureshi N."/>
            <person name="Young M."/>
            <person name="Shi Z."/>
            <person name="Ezeji T."/>
            <person name="White B."/>
            <person name="Blaschek H."/>
            <person name="Richardson P."/>
        </authorList>
    </citation>
    <scope>NUCLEOTIDE SEQUENCE [LARGE SCALE GENOMIC DNA]</scope>
    <source>
        <strain>ATCC 51743 / NCIMB 8052</strain>
    </source>
</reference>
<sequence length="304" mass="32881">MESLNLKNLTTESRNETTINIDKVSTLEMVKIMNDEDKKVANAVEKELPKIAKAIDMIAERIHRGGRLIYIGAGTSGRLGVLDASECPPTYGVSEELVQGIIAGGKEAIFRAKEGAEDSEELAVEDLKSKNITENDTIIGLAASGRTPYVIGGLRYADQIGALTVSVTCNENSDVAKEAYISIAPVVGPEVVTGSTRLKSGTAQKLVLNMISTGVMIKLGKVYGNLMVDLRATNEKLIERAKGIVCKATGINMEEATEALNKTDYDVKLAIFMMLSKLNKDEARIKLDKNKGYIAKALQEIDNK</sequence>
<proteinExistence type="inferred from homology"/>
<keyword id="KW-0119">Carbohydrate metabolism</keyword>
<keyword id="KW-0456">Lyase</keyword>
<name>MURQ_CLOB8</name>
<dbReference type="EC" id="4.2.1.126" evidence="1"/>
<dbReference type="EMBL" id="CP000721">
    <property type="protein sequence ID" value="ABR34087.1"/>
    <property type="molecule type" value="Genomic_DNA"/>
</dbReference>
<dbReference type="RefSeq" id="WP_012058148.1">
    <property type="nucleotide sequence ID" value="NC_009617.1"/>
</dbReference>
<dbReference type="SMR" id="A6LUQ7"/>
<dbReference type="KEGG" id="cbe:Cbei_1917"/>
<dbReference type="eggNOG" id="COG2103">
    <property type="taxonomic scope" value="Bacteria"/>
</dbReference>
<dbReference type="HOGENOM" id="CLU_049049_1_1_9"/>
<dbReference type="UniPathway" id="UPA00342"/>
<dbReference type="Proteomes" id="UP000000565">
    <property type="component" value="Chromosome"/>
</dbReference>
<dbReference type="GO" id="GO:0097367">
    <property type="term" value="F:carbohydrate derivative binding"/>
    <property type="evidence" value="ECO:0007669"/>
    <property type="project" value="InterPro"/>
</dbReference>
<dbReference type="GO" id="GO:0016835">
    <property type="term" value="F:carbon-oxygen lyase activity"/>
    <property type="evidence" value="ECO:0007669"/>
    <property type="project" value="UniProtKB-UniRule"/>
</dbReference>
<dbReference type="GO" id="GO:0016803">
    <property type="term" value="F:ether hydrolase activity"/>
    <property type="evidence" value="ECO:0007669"/>
    <property type="project" value="TreeGrafter"/>
</dbReference>
<dbReference type="GO" id="GO:0046348">
    <property type="term" value="P:amino sugar catabolic process"/>
    <property type="evidence" value="ECO:0007669"/>
    <property type="project" value="InterPro"/>
</dbReference>
<dbReference type="GO" id="GO:0097173">
    <property type="term" value="P:N-acetylmuramic acid catabolic process"/>
    <property type="evidence" value="ECO:0007669"/>
    <property type="project" value="UniProtKB-UniPathway"/>
</dbReference>
<dbReference type="GO" id="GO:0009254">
    <property type="term" value="P:peptidoglycan turnover"/>
    <property type="evidence" value="ECO:0007669"/>
    <property type="project" value="TreeGrafter"/>
</dbReference>
<dbReference type="CDD" id="cd05007">
    <property type="entry name" value="SIS_Etherase"/>
    <property type="match status" value="1"/>
</dbReference>
<dbReference type="FunFam" id="1.10.8.1080:FF:000001">
    <property type="entry name" value="N-acetylmuramic acid 6-phosphate etherase"/>
    <property type="match status" value="1"/>
</dbReference>
<dbReference type="FunFam" id="3.40.50.10490:FF:000014">
    <property type="entry name" value="N-acetylmuramic acid 6-phosphate etherase"/>
    <property type="match status" value="1"/>
</dbReference>
<dbReference type="Gene3D" id="1.10.8.1080">
    <property type="match status" value="1"/>
</dbReference>
<dbReference type="Gene3D" id="3.40.50.10490">
    <property type="entry name" value="Glucose-6-phosphate isomerase like protein, domain 1"/>
    <property type="match status" value="2"/>
</dbReference>
<dbReference type="HAMAP" id="MF_00068">
    <property type="entry name" value="MurQ"/>
    <property type="match status" value="1"/>
</dbReference>
<dbReference type="InterPro" id="IPR005488">
    <property type="entry name" value="Etherase_MurQ"/>
</dbReference>
<dbReference type="InterPro" id="IPR005486">
    <property type="entry name" value="Glucokinase_regulatory_CS"/>
</dbReference>
<dbReference type="InterPro" id="IPR040190">
    <property type="entry name" value="MURQ/GCKR"/>
</dbReference>
<dbReference type="InterPro" id="IPR001347">
    <property type="entry name" value="SIS_dom"/>
</dbReference>
<dbReference type="InterPro" id="IPR046348">
    <property type="entry name" value="SIS_dom_sf"/>
</dbReference>
<dbReference type="NCBIfam" id="TIGR00274">
    <property type="entry name" value="N-acetylmuramic acid 6-phosphate etherase"/>
    <property type="match status" value="1"/>
</dbReference>
<dbReference type="NCBIfam" id="NF003915">
    <property type="entry name" value="PRK05441.1"/>
    <property type="match status" value="1"/>
</dbReference>
<dbReference type="NCBIfam" id="NF009222">
    <property type="entry name" value="PRK12570.1"/>
    <property type="match status" value="1"/>
</dbReference>
<dbReference type="PANTHER" id="PTHR10088">
    <property type="entry name" value="GLUCOKINASE REGULATORY PROTEIN"/>
    <property type="match status" value="1"/>
</dbReference>
<dbReference type="PANTHER" id="PTHR10088:SF4">
    <property type="entry name" value="GLUCOKINASE REGULATORY PROTEIN"/>
    <property type="match status" value="1"/>
</dbReference>
<dbReference type="Pfam" id="PF20741">
    <property type="entry name" value="GKRP-like_C"/>
    <property type="match status" value="1"/>
</dbReference>
<dbReference type="Pfam" id="PF22645">
    <property type="entry name" value="GKRP_SIS_N"/>
    <property type="match status" value="1"/>
</dbReference>
<dbReference type="SUPFAM" id="SSF53697">
    <property type="entry name" value="SIS domain"/>
    <property type="match status" value="1"/>
</dbReference>
<dbReference type="PROSITE" id="PS01272">
    <property type="entry name" value="GCKR"/>
    <property type="match status" value="1"/>
</dbReference>
<dbReference type="PROSITE" id="PS51464">
    <property type="entry name" value="SIS"/>
    <property type="match status" value="1"/>
</dbReference>
<organism>
    <name type="scientific">Clostridium beijerinckii (strain ATCC 51743 / NCIMB 8052)</name>
    <name type="common">Clostridium acetobutylicum</name>
    <dbReference type="NCBI Taxonomy" id="290402"/>
    <lineage>
        <taxon>Bacteria</taxon>
        <taxon>Bacillati</taxon>
        <taxon>Bacillota</taxon>
        <taxon>Clostridia</taxon>
        <taxon>Eubacteriales</taxon>
        <taxon>Clostridiaceae</taxon>
        <taxon>Clostridium</taxon>
    </lineage>
</organism>
<comment type="function">
    <text evidence="1">Specifically catalyzes the cleavage of the D-lactyl ether substituent of MurNAc 6-phosphate, producing GlcNAc 6-phosphate and D-lactate.</text>
</comment>
<comment type="catalytic activity">
    <reaction evidence="1">
        <text>N-acetyl-D-muramate 6-phosphate + H2O = N-acetyl-D-glucosamine 6-phosphate + (R)-lactate</text>
        <dbReference type="Rhea" id="RHEA:26410"/>
        <dbReference type="ChEBI" id="CHEBI:15377"/>
        <dbReference type="ChEBI" id="CHEBI:16004"/>
        <dbReference type="ChEBI" id="CHEBI:57513"/>
        <dbReference type="ChEBI" id="CHEBI:58722"/>
        <dbReference type="EC" id="4.2.1.126"/>
    </reaction>
</comment>
<comment type="pathway">
    <text evidence="1">Amino-sugar metabolism; N-acetylmuramate degradation.</text>
</comment>
<comment type="subunit">
    <text evidence="1">Homodimer.</text>
</comment>
<comment type="miscellaneous">
    <text evidence="1">A lyase-type mechanism (elimination/hydration) is suggested for the cleavage of the lactyl ether bond of MurNAc 6-phosphate, with the formation of an alpha,beta-unsaturated aldehyde intermediate with (E)-stereochemistry, followed by the syn addition of water to give product.</text>
</comment>
<comment type="similarity">
    <text evidence="1">Belongs to the GCKR-like family. MurNAc-6-P etherase subfamily.</text>
</comment>